<sequence length="200" mass="22307">MTLVPMVVEQTSRGERAYDIYSRLLKERIIFITGPIEDQMASLVVAQLVFLEAENPEKEICMYINSPGGVVTAGLSIYDTMQYIKPKVSTLCLGQAASMGSLLLAAGEPGMRYALPNSRIMIHQPSGGFQGQATDIEIHAKEILDIKSRLNDIYVKHTGRDLPEVVANMERDNFMRAEKAKDFGIIDKVIEKRLDIEESN</sequence>
<gene>
    <name evidence="1" type="primary">clpP</name>
    <name type="ordered locus">Ecaj_0202</name>
</gene>
<reference key="1">
    <citation type="journal article" date="2006" name="J. Bacteriol.">
        <title>The genome of the obligately intracellular bacterium Ehrlichia canis reveals themes of complex membrane structure and immune evasion strategies.</title>
        <authorList>
            <person name="Mavromatis K."/>
            <person name="Doyle C.K."/>
            <person name="Lykidis A."/>
            <person name="Ivanova N."/>
            <person name="Francino M.P."/>
            <person name="Chain P."/>
            <person name="Shin M."/>
            <person name="Malfatti S."/>
            <person name="Larimer F."/>
            <person name="Copeland A."/>
            <person name="Detter J.C."/>
            <person name="Land M."/>
            <person name="Richardson P.M."/>
            <person name="Yu X.J."/>
            <person name="Walker D.H."/>
            <person name="McBride J.W."/>
            <person name="Kyrpides N.C."/>
        </authorList>
    </citation>
    <scope>NUCLEOTIDE SEQUENCE [LARGE SCALE GENOMIC DNA]</scope>
    <source>
        <strain>Jake</strain>
    </source>
</reference>
<feature type="chain" id="PRO_0000226447" description="ATP-dependent Clp protease proteolytic subunit">
    <location>
        <begin position="1"/>
        <end position="200"/>
    </location>
</feature>
<feature type="active site" description="Nucleophile" evidence="1">
    <location>
        <position position="98"/>
    </location>
</feature>
<feature type="active site" evidence="1">
    <location>
        <position position="123"/>
    </location>
</feature>
<comment type="function">
    <text evidence="1">Cleaves peptides in various proteins in a process that requires ATP hydrolysis. Has a chymotrypsin-like activity. Plays a major role in the degradation of misfolded proteins.</text>
</comment>
<comment type="catalytic activity">
    <reaction evidence="1">
        <text>Hydrolysis of proteins to small peptides in the presence of ATP and magnesium. alpha-casein is the usual test substrate. In the absence of ATP, only oligopeptides shorter than five residues are hydrolyzed (such as succinyl-Leu-Tyr-|-NHMec, and Leu-Tyr-Leu-|-Tyr-Trp, in which cleavage of the -Tyr-|-Leu- and -Tyr-|-Trp bonds also occurs).</text>
        <dbReference type="EC" id="3.4.21.92"/>
    </reaction>
</comment>
<comment type="subunit">
    <text evidence="1">Fourteen ClpP subunits assemble into 2 heptameric rings which stack back to back to give a disk-like structure with a central cavity, resembling the structure of eukaryotic proteasomes.</text>
</comment>
<comment type="subcellular location">
    <subcellularLocation>
        <location evidence="1">Cytoplasm</location>
    </subcellularLocation>
</comment>
<comment type="similarity">
    <text evidence="1">Belongs to the peptidase S14 family.</text>
</comment>
<protein>
    <recommendedName>
        <fullName evidence="1">ATP-dependent Clp protease proteolytic subunit</fullName>
        <ecNumber evidence="1">3.4.21.92</ecNumber>
    </recommendedName>
    <alternativeName>
        <fullName evidence="1">Endopeptidase Clp</fullName>
    </alternativeName>
</protein>
<evidence type="ECO:0000255" key="1">
    <source>
        <dbReference type="HAMAP-Rule" id="MF_00444"/>
    </source>
</evidence>
<organism>
    <name type="scientific">Ehrlichia canis (strain Jake)</name>
    <dbReference type="NCBI Taxonomy" id="269484"/>
    <lineage>
        <taxon>Bacteria</taxon>
        <taxon>Pseudomonadati</taxon>
        <taxon>Pseudomonadota</taxon>
        <taxon>Alphaproteobacteria</taxon>
        <taxon>Rickettsiales</taxon>
        <taxon>Anaplasmataceae</taxon>
        <taxon>Ehrlichia</taxon>
    </lineage>
</organism>
<name>CLPP_EHRCJ</name>
<accession>Q3YSQ3</accession>
<dbReference type="EC" id="3.4.21.92" evidence="1"/>
<dbReference type="EMBL" id="CP000107">
    <property type="protein sequence ID" value="AAZ68252.1"/>
    <property type="molecule type" value="Genomic_DNA"/>
</dbReference>
<dbReference type="RefSeq" id="WP_011304330.1">
    <property type="nucleotide sequence ID" value="NC_007354.1"/>
</dbReference>
<dbReference type="SMR" id="Q3YSQ3"/>
<dbReference type="FunCoup" id="Q3YSQ3">
    <property type="interactions" value="300"/>
</dbReference>
<dbReference type="STRING" id="269484.Ecaj_0202"/>
<dbReference type="MEROPS" id="S14.001"/>
<dbReference type="KEGG" id="ecn:Ecaj_0202"/>
<dbReference type="eggNOG" id="COG0740">
    <property type="taxonomic scope" value="Bacteria"/>
</dbReference>
<dbReference type="HOGENOM" id="CLU_058707_3_3_5"/>
<dbReference type="InParanoid" id="Q3YSQ3"/>
<dbReference type="Proteomes" id="UP000000435">
    <property type="component" value="Chromosome"/>
</dbReference>
<dbReference type="GO" id="GO:0005737">
    <property type="term" value="C:cytoplasm"/>
    <property type="evidence" value="ECO:0007669"/>
    <property type="project" value="UniProtKB-SubCell"/>
</dbReference>
<dbReference type="GO" id="GO:0009368">
    <property type="term" value="C:endopeptidase Clp complex"/>
    <property type="evidence" value="ECO:0007669"/>
    <property type="project" value="TreeGrafter"/>
</dbReference>
<dbReference type="GO" id="GO:0004176">
    <property type="term" value="F:ATP-dependent peptidase activity"/>
    <property type="evidence" value="ECO:0007669"/>
    <property type="project" value="InterPro"/>
</dbReference>
<dbReference type="GO" id="GO:0051117">
    <property type="term" value="F:ATPase binding"/>
    <property type="evidence" value="ECO:0007669"/>
    <property type="project" value="TreeGrafter"/>
</dbReference>
<dbReference type="GO" id="GO:0004252">
    <property type="term" value="F:serine-type endopeptidase activity"/>
    <property type="evidence" value="ECO:0007669"/>
    <property type="project" value="UniProtKB-UniRule"/>
</dbReference>
<dbReference type="GO" id="GO:0006515">
    <property type="term" value="P:protein quality control for misfolded or incompletely synthesized proteins"/>
    <property type="evidence" value="ECO:0007669"/>
    <property type="project" value="TreeGrafter"/>
</dbReference>
<dbReference type="CDD" id="cd07017">
    <property type="entry name" value="S14_ClpP_2"/>
    <property type="match status" value="1"/>
</dbReference>
<dbReference type="FunFam" id="3.90.226.10:FF:000001">
    <property type="entry name" value="ATP-dependent Clp protease proteolytic subunit"/>
    <property type="match status" value="1"/>
</dbReference>
<dbReference type="Gene3D" id="3.90.226.10">
    <property type="entry name" value="2-enoyl-CoA Hydratase, Chain A, domain 1"/>
    <property type="match status" value="1"/>
</dbReference>
<dbReference type="HAMAP" id="MF_00444">
    <property type="entry name" value="ClpP"/>
    <property type="match status" value="1"/>
</dbReference>
<dbReference type="InterPro" id="IPR001907">
    <property type="entry name" value="ClpP"/>
</dbReference>
<dbReference type="InterPro" id="IPR029045">
    <property type="entry name" value="ClpP/crotonase-like_dom_sf"/>
</dbReference>
<dbReference type="InterPro" id="IPR023562">
    <property type="entry name" value="ClpP/TepA"/>
</dbReference>
<dbReference type="InterPro" id="IPR033135">
    <property type="entry name" value="ClpP_His_AS"/>
</dbReference>
<dbReference type="InterPro" id="IPR018215">
    <property type="entry name" value="ClpP_Ser_AS"/>
</dbReference>
<dbReference type="NCBIfam" id="TIGR00493">
    <property type="entry name" value="clpP"/>
    <property type="match status" value="1"/>
</dbReference>
<dbReference type="NCBIfam" id="NF001368">
    <property type="entry name" value="PRK00277.1"/>
    <property type="match status" value="1"/>
</dbReference>
<dbReference type="NCBIfam" id="NF009205">
    <property type="entry name" value="PRK12553.1"/>
    <property type="match status" value="1"/>
</dbReference>
<dbReference type="PANTHER" id="PTHR10381">
    <property type="entry name" value="ATP-DEPENDENT CLP PROTEASE PROTEOLYTIC SUBUNIT"/>
    <property type="match status" value="1"/>
</dbReference>
<dbReference type="PANTHER" id="PTHR10381:SF70">
    <property type="entry name" value="ATP-DEPENDENT CLP PROTEASE PROTEOLYTIC SUBUNIT"/>
    <property type="match status" value="1"/>
</dbReference>
<dbReference type="Pfam" id="PF00574">
    <property type="entry name" value="CLP_protease"/>
    <property type="match status" value="1"/>
</dbReference>
<dbReference type="PRINTS" id="PR00127">
    <property type="entry name" value="CLPPROTEASEP"/>
</dbReference>
<dbReference type="SUPFAM" id="SSF52096">
    <property type="entry name" value="ClpP/crotonase"/>
    <property type="match status" value="1"/>
</dbReference>
<dbReference type="PROSITE" id="PS00382">
    <property type="entry name" value="CLP_PROTEASE_HIS"/>
    <property type="match status" value="1"/>
</dbReference>
<dbReference type="PROSITE" id="PS00381">
    <property type="entry name" value="CLP_PROTEASE_SER"/>
    <property type="match status" value="1"/>
</dbReference>
<keyword id="KW-0963">Cytoplasm</keyword>
<keyword id="KW-0378">Hydrolase</keyword>
<keyword id="KW-0645">Protease</keyword>
<keyword id="KW-0720">Serine protease</keyword>
<proteinExistence type="inferred from homology"/>